<proteinExistence type="inferred from homology"/>
<dbReference type="EC" id="1.1.5.4" evidence="1"/>
<dbReference type="EMBL" id="CP000036">
    <property type="protein sequence ID" value="ABB66675.1"/>
    <property type="molecule type" value="Genomic_DNA"/>
</dbReference>
<dbReference type="RefSeq" id="WP_000758039.1">
    <property type="nucleotide sequence ID" value="NC_007613.1"/>
</dbReference>
<dbReference type="SMR" id="Q31Z33"/>
<dbReference type="KEGG" id="sbo:SBO_2097"/>
<dbReference type="HOGENOM" id="CLU_028151_0_0_6"/>
<dbReference type="UniPathway" id="UPA00223">
    <property type="reaction ID" value="UER01008"/>
</dbReference>
<dbReference type="Proteomes" id="UP000007067">
    <property type="component" value="Chromosome"/>
</dbReference>
<dbReference type="GO" id="GO:0047545">
    <property type="term" value="F:2-hydroxyglutarate dehydrogenase activity"/>
    <property type="evidence" value="ECO:0007669"/>
    <property type="project" value="TreeGrafter"/>
</dbReference>
<dbReference type="GO" id="GO:0008924">
    <property type="term" value="F:L-malate dehydrogenase (quinone) activity"/>
    <property type="evidence" value="ECO:0007669"/>
    <property type="project" value="UniProtKB-UniRule"/>
</dbReference>
<dbReference type="GO" id="GO:0006099">
    <property type="term" value="P:tricarboxylic acid cycle"/>
    <property type="evidence" value="ECO:0007669"/>
    <property type="project" value="UniProtKB-UniRule"/>
</dbReference>
<dbReference type="Gene3D" id="3.30.9.10">
    <property type="entry name" value="D-Amino Acid Oxidase, subunit A, domain 2"/>
    <property type="match status" value="1"/>
</dbReference>
<dbReference type="Gene3D" id="3.50.50.60">
    <property type="entry name" value="FAD/NAD(P)-binding domain"/>
    <property type="match status" value="1"/>
</dbReference>
<dbReference type="HAMAP" id="MF_00212">
    <property type="entry name" value="MQO"/>
    <property type="match status" value="1"/>
</dbReference>
<dbReference type="InterPro" id="IPR036188">
    <property type="entry name" value="FAD/NAD-bd_sf"/>
</dbReference>
<dbReference type="InterPro" id="IPR006231">
    <property type="entry name" value="MQO"/>
</dbReference>
<dbReference type="NCBIfam" id="TIGR01320">
    <property type="entry name" value="mal_quin_oxido"/>
    <property type="match status" value="1"/>
</dbReference>
<dbReference type="NCBIfam" id="NF003603">
    <property type="entry name" value="PRK05257.1-1"/>
    <property type="match status" value="1"/>
</dbReference>
<dbReference type="NCBIfam" id="NF003605">
    <property type="entry name" value="PRK05257.1-4"/>
    <property type="match status" value="1"/>
</dbReference>
<dbReference type="NCBIfam" id="NF003606">
    <property type="entry name" value="PRK05257.2-1"/>
    <property type="match status" value="1"/>
</dbReference>
<dbReference type="NCBIfam" id="NF003608">
    <property type="entry name" value="PRK05257.2-4"/>
    <property type="match status" value="1"/>
</dbReference>
<dbReference type="NCBIfam" id="NF003611">
    <property type="entry name" value="PRK05257.3-2"/>
    <property type="match status" value="1"/>
</dbReference>
<dbReference type="NCBIfam" id="NF009875">
    <property type="entry name" value="PRK13339.1"/>
    <property type="match status" value="1"/>
</dbReference>
<dbReference type="PANTHER" id="PTHR43104">
    <property type="entry name" value="L-2-HYDROXYGLUTARATE DEHYDROGENASE, MITOCHONDRIAL"/>
    <property type="match status" value="1"/>
</dbReference>
<dbReference type="PANTHER" id="PTHR43104:SF2">
    <property type="entry name" value="L-2-HYDROXYGLUTARATE DEHYDROGENASE, MITOCHONDRIAL"/>
    <property type="match status" value="1"/>
</dbReference>
<dbReference type="Pfam" id="PF06039">
    <property type="entry name" value="Mqo"/>
    <property type="match status" value="1"/>
</dbReference>
<dbReference type="SUPFAM" id="SSF51905">
    <property type="entry name" value="FAD/NAD(P)-binding domain"/>
    <property type="match status" value="1"/>
</dbReference>
<name>MQO_SHIBS</name>
<comment type="catalytic activity">
    <reaction evidence="1">
        <text>(S)-malate + a quinone = a quinol + oxaloacetate</text>
        <dbReference type="Rhea" id="RHEA:46012"/>
        <dbReference type="ChEBI" id="CHEBI:15589"/>
        <dbReference type="ChEBI" id="CHEBI:16452"/>
        <dbReference type="ChEBI" id="CHEBI:24646"/>
        <dbReference type="ChEBI" id="CHEBI:132124"/>
        <dbReference type="EC" id="1.1.5.4"/>
    </reaction>
</comment>
<comment type="cofactor">
    <cofactor evidence="1">
        <name>FAD</name>
        <dbReference type="ChEBI" id="CHEBI:57692"/>
    </cofactor>
</comment>
<comment type="pathway">
    <text evidence="1">Carbohydrate metabolism; tricarboxylic acid cycle; oxaloacetate from (S)-malate (quinone route): step 1/1.</text>
</comment>
<comment type="similarity">
    <text evidence="1">Belongs to the MQO family.</text>
</comment>
<reference key="1">
    <citation type="journal article" date="2005" name="Nucleic Acids Res.">
        <title>Genome dynamics and diversity of Shigella species, the etiologic agents of bacillary dysentery.</title>
        <authorList>
            <person name="Yang F."/>
            <person name="Yang J."/>
            <person name="Zhang X."/>
            <person name="Chen L."/>
            <person name="Jiang Y."/>
            <person name="Yan Y."/>
            <person name="Tang X."/>
            <person name="Wang J."/>
            <person name="Xiong Z."/>
            <person name="Dong J."/>
            <person name="Xue Y."/>
            <person name="Zhu Y."/>
            <person name="Xu X."/>
            <person name="Sun L."/>
            <person name="Chen S."/>
            <person name="Nie H."/>
            <person name="Peng J."/>
            <person name="Xu J."/>
            <person name="Wang Y."/>
            <person name="Yuan Z."/>
            <person name="Wen Y."/>
            <person name="Yao Z."/>
            <person name="Shen Y."/>
            <person name="Qiang B."/>
            <person name="Hou Y."/>
            <person name="Yu J."/>
            <person name="Jin Q."/>
        </authorList>
    </citation>
    <scope>NUCLEOTIDE SEQUENCE [LARGE SCALE GENOMIC DNA]</scope>
    <source>
        <strain>Sb227</strain>
    </source>
</reference>
<accession>Q31Z33</accession>
<sequence>MKKVTAMLFSMAVGLNAVSMAAKAKASEEQETDVLLIGGGIMSATLGTYLRELEPEWSMTMLERLEGVAQESSNGWNNAGTGHSALMELNYTPQNADGSISIEKAVAINEAFQISRQFWAHQVERGVLRTPRSFINTVPHMSFVWGEDNVNFLRARYAALQQSSLFRGMRYSEDHAQIKEWAPLVMEGRDPQQKVAATRTEIGTDVNYGEITRQLIASLQKKSNFSLQLSSEVRALKRNDDNTWTVTVADLKNGTAQNIRAKFVFIGAGGAALKLLQESGIPEAKDYAGFPVGGQFLVSENPDVVNHHLAKVYGKASVGAPPMSVPHIDTRVLDGKRVVLFGPFATFSTKFLKNGSLWDLMSSTTTSNVMPMMHVGLDNFDLVKYLVSQVMLSEEDRFEALKEYYPQAKKEDWRLWQAGQRVQIIKRDADKGGVLRLGTEVVSDQQGTIAALLGASPGASTAAPIMLDLLEKVFGDRVSSPQWQATLKAIVPSYGRKLNGDVAATERELQYTSEVLGLKYDKPQAADSTPKPQLKPQPVQKEVADIAL</sequence>
<feature type="chain" id="PRO_1000023814" description="Probable malate:quinone oxidoreductase">
    <location>
        <begin position="1"/>
        <end position="548"/>
    </location>
</feature>
<feature type="region of interest" description="Disordered" evidence="2">
    <location>
        <begin position="521"/>
        <end position="548"/>
    </location>
</feature>
<feature type="compositionally biased region" description="Low complexity" evidence="2">
    <location>
        <begin position="530"/>
        <end position="541"/>
    </location>
</feature>
<protein>
    <recommendedName>
        <fullName evidence="1">Probable malate:quinone oxidoreductase</fullName>
        <ecNumber evidence="1">1.1.5.4</ecNumber>
    </recommendedName>
    <alternativeName>
        <fullName evidence="1">MQO</fullName>
    </alternativeName>
    <alternativeName>
        <fullName evidence="1">Malate dehydrogenase [quinone]</fullName>
    </alternativeName>
</protein>
<evidence type="ECO:0000255" key="1">
    <source>
        <dbReference type="HAMAP-Rule" id="MF_00212"/>
    </source>
</evidence>
<evidence type="ECO:0000256" key="2">
    <source>
        <dbReference type="SAM" id="MobiDB-lite"/>
    </source>
</evidence>
<keyword id="KW-0274">FAD</keyword>
<keyword id="KW-0285">Flavoprotein</keyword>
<keyword id="KW-0560">Oxidoreductase</keyword>
<keyword id="KW-0816">Tricarboxylic acid cycle</keyword>
<organism>
    <name type="scientific">Shigella boydii serotype 4 (strain Sb227)</name>
    <dbReference type="NCBI Taxonomy" id="300268"/>
    <lineage>
        <taxon>Bacteria</taxon>
        <taxon>Pseudomonadati</taxon>
        <taxon>Pseudomonadota</taxon>
        <taxon>Gammaproteobacteria</taxon>
        <taxon>Enterobacterales</taxon>
        <taxon>Enterobacteriaceae</taxon>
        <taxon>Shigella</taxon>
    </lineage>
</organism>
<gene>
    <name evidence="1" type="primary">mqo</name>
    <name type="ordered locus">SBO_2097</name>
</gene>